<gene>
    <name evidence="1" type="primary">rplO</name>
    <name type="ordered locus">SNSL254_A3690</name>
</gene>
<keyword id="KW-0687">Ribonucleoprotein</keyword>
<keyword id="KW-0689">Ribosomal protein</keyword>
<keyword id="KW-0694">RNA-binding</keyword>
<keyword id="KW-0699">rRNA-binding</keyword>
<accession>B4SUS1</accession>
<name>RL15_SALNS</name>
<dbReference type="EMBL" id="CP001113">
    <property type="protein sequence ID" value="ACF65637.1"/>
    <property type="molecule type" value="Genomic_DNA"/>
</dbReference>
<dbReference type="RefSeq" id="WP_001238917.1">
    <property type="nucleotide sequence ID" value="NZ_CCMR01000003.1"/>
</dbReference>
<dbReference type="SMR" id="B4SUS1"/>
<dbReference type="GeneID" id="93778686"/>
<dbReference type="KEGG" id="see:SNSL254_A3690"/>
<dbReference type="HOGENOM" id="CLU_055188_4_2_6"/>
<dbReference type="Proteomes" id="UP000008824">
    <property type="component" value="Chromosome"/>
</dbReference>
<dbReference type="GO" id="GO:0022625">
    <property type="term" value="C:cytosolic large ribosomal subunit"/>
    <property type="evidence" value="ECO:0007669"/>
    <property type="project" value="TreeGrafter"/>
</dbReference>
<dbReference type="GO" id="GO:0019843">
    <property type="term" value="F:rRNA binding"/>
    <property type="evidence" value="ECO:0007669"/>
    <property type="project" value="UniProtKB-UniRule"/>
</dbReference>
<dbReference type="GO" id="GO:0003735">
    <property type="term" value="F:structural constituent of ribosome"/>
    <property type="evidence" value="ECO:0007669"/>
    <property type="project" value="InterPro"/>
</dbReference>
<dbReference type="GO" id="GO:0006412">
    <property type="term" value="P:translation"/>
    <property type="evidence" value="ECO:0007669"/>
    <property type="project" value="UniProtKB-UniRule"/>
</dbReference>
<dbReference type="FunFam" id="3.100.10.10:FF:000003">
    <property type="entry name" value="50S ribosomal protein L15"/>
    <property type="match status" value="1"/>
</dbReference>
<dbReference type="Gene3D" id="3.100.10.10">
    <property type="match status" value="1"/>
</dbReference>
<dbReference type="HAMAP" id="MF_01341">
    <property type="entry name" value="Ribosomal_uL15"/>
    <property type="match status" value="1"/>
</dbReference>
<dbReference type="InterPro" id="IPR030878">
    <property type="entry name" value="Ribosomal_uL15"/>
</dbReference>
<dbReference type="InterPro" id="IPR021131">
    <property type="entry name" value="Ribosomal_uL15/eL18"/>
</dbReference>
<dbReference type="InterPro" id="IPR036227">
    <property type="entry name" value="Ribosomal_uL15/eL18_sf"/>
</dbReference>
<dbReference type="InterPro" id="IPR005749">
    <property type="entry name" value="Ribosomal_uL15_bac-type"/>
</dbReference>
<dbReference type="InterPro" id="IPR001196">
    <property type="entry name" value="Ribosomal_uL15_CS"/>
</dbReference>
<dbReference type="NCBIfam" id="TIGR01071">
    <property type="entry name" value="rplO_bact"/>
    <property type="match status" value="1"/>
</dbReference>
<dbReference type="PANTHER" id="PTHR12934">
    <property type="entry name" value="50S RIBOSOMAL PROTEIN L15"/>
    <property type="match status" value="1"/>
</dbReference>
<dbReference type="PANTHER" id="PTHR12934:SF11">
    <property type="entry name" value="LARGE RIBOSOMAL SUBUNIT PROTEIN UL15M"/>
    <property type="match status" value="1"/>
</dbReference>
<dbReference type="Pfam" id="PF00828">
    <property type="entry name" value="Ribosomal_L27A"/>
    <property type="match status" value="1"/>
</dbReference>
<dbReference type="SUPFAM" id="SSF52080">
    <property type="entry name" value="Ribosomal proteins L15p and L18e"/>
    <property type="match status" value="1"/>
</dbReference>
<dbReference type="PROSITE" id="PS00475">
    <property type="entry name" value="RIBOSOMAL_L15"/>
    <property type="match status" value="1"/>
</dbReference>
<organism>
    <name type="scientific">Salmonella newport (strain SL254)</name>
    <dbReference type="NCBI Taxonomy" id="423368"/>
    <lineage>
        <taxon>Bacteria</taxon>
        <taxon>Pseudomonadati</taxon>
        <taxon>Pseudomonadota</taxon>
        <taxon>Gammaproteobacteria</taxon>
        <taxon>Enterobacterales</taxon>
        <taxon>Enterobacteriaceae</taxon>
        <taxon>Salmonella</taxon>
    </lineage>
</organism>
<protein>
    <recommendedName>
        <fullName evidence="1">Large ribosomal subunit protein uL15</fullName>
    </recommendedName>
    <alternativeName>
        <fullName evidence="3">50S ribosomal protein L15</fullName>
    </alternativeName>
</protein>
<comment type="function">
    <text evidence="1">Binds to the 23S rRNA.</text>
</comment>
<comment type="subunit">
    <text evidence="1">Part of the 50S ribosomal subunit.</text>
</comment>
<comment type="similarity">
    <text evidence="1">Belongs to the universal ribosomal protein uL15 family.</text>
</comment>
<proteinExistence type="inferred from homology"/>
<evidence type="ECO:0000255" key="1">
    <source>
        <dbReference type="HAMAP-Rule" id="MF_01341"/>
    </source>
</evidence>
<evidence type="ECO:0000256" key="2">
    <source>
        <dbReference type="SAM" id="MobiDB-lite"/>
    </source>
</evidence>
<evidence type="ECO:0000305" key="3"/>
<reference key="1">
    <citation type="journal article" date="2011" name="J. Bacteriol.">
        <title>Comparative genomics of 28 Salmonella enterica isolates: evidence for CRISPR-mediated adaptive sublineage evolution.</title>
        <authorList>
            <person name="Fricke W.F."/>
            <person name="Mammel M.K."/>
            <person name="McDermott P.F."/>
            <person name="Tartera C."/>
            <person name="White D.G."/>
            <person name="Leclerc J.E."/>
            <person name="Ravel J."/>
            <person name="Cebula T.A."/>
        </authorList>
    </citation>
    <scope>NUCLEOTIDE SEQUENCE [LARGE SCALE GENOMIC DNA]</scope>
    <source>
        <strain>SL254</strain>
    </source>
</reference>
<sequence length="144" mass="14966">MRLNTLSPAEGSKKAGKRLGRGIGSGLGKTGGRGHKGQKSRSGGGVRRGFEGGQMPLYRRLPKFGFTSRKAAITAEVRLSDLAKVEGGVVDLNTLKAANIIGIQIEFAKVILAGEVTTPVTVRGLRVTKGARAAIEAAGGKIEE</sequence>
<feature type="chain" id="PRO_1000142877" description="Large ribosomal subunit protein uL15">
    <location>
        <begin position="1"/>
        <end position="144"/>
    </location>
</feature>
<feature type="region of interest" description="Disordered" evidence="2">
    <location>
        <begin position="1"/>
        <end position="54"/>
    </location>
</feature>
<feature type="compositionally biased region" description="Gly residues" evidence="2">
    <location>
        <begin position="21"/>
        <end position="31"/>
    </location>
</feature>